<gene>
    <name evidence="1" type="primary">fabH</name>
    <name type="ordered locus">OEOE_1593</name>
</gene>
<dbReference type="EC" id="2.3.1.180" evidence="1"/>
<dbReference type="EMBL" id="CP000411">
    <property type="protein sequence ID" value="ABJ57445.1"/>
    <property type="molecule type" value="Genomic_DNA"/>
</dbReference>
<dbReference type="RefSeq" id="WP_011677773.1">
    <property type="nucleotide sequence ID" value="NC_008528.1"/>
</dbReference>
<dbReference type="SMR" id="Q04DM7"/>
<dbReference type="STRING" id="203123.OEOE_1593"/>
<dbReference type="KEGG" id="ooe:OEOE_1593"/>
<dbReference type="PATRIC" id="fig|203123.7.peg.1623"/>
<dbReference type="eggNOG" id="COG0332">
    <property type="taxonomic scope" value="Bacteria"/>
</dbReference>
<dbReference type="HOGENOM" id="CLU_039592_4_1_9"/>
<dbReference type="UniPathway" id="UPA00094"/>
<dbReference type="Proteomes" id="UP000000774">
    <property type="component" value="Chromosome"/>
</dbReference>
<dbReference type="GO" id="GO:0005737">
    <property type="term" value="C:cytoplasm"/>
    <property type="evidence" value="ECO:0007669"/>
    <property type="project" value="UniProtKB-SubCell"/>
</dbReference>
<dbReference type="GO" id="GO:0004315">
    <property type="term" value="F:3-oxoacyl-[acyl-carrier-protein] synthase activity"/>
    <property type="evidence" value="ECO:0007669"/>
    <property type="project" value="InterPro"/>
</dbReference>
<dbReference type="GO" id="GO:0033818">
    <property type="term" value="F:beta-ketoacyl-acyl-carrier-protein synthase III activity"/>
    <property type="evidence" value="ECO:0007669"/>
    <property type="project" value="UniProtKB-UniRule"/>
</dbReference>
<dbReference type="GO" id="GO:0006633">
    <property type="term" value="P:fatty acid biosynthetic process"/>
    <property type="evidence" value="ECO:0007669"/>
    <property type="project" value="UniProtKB-UniRule"/>
</dbReference>
<dbReference type="CDD" id="cd00830">
    <property type="entry name" value="KAS_III"/>
    <property type="match status" value="1"/>
</dbReference>
<dbReference type="Gene3D" id="3.40.47.10">
    <property type="match status" value="1"/>
</dbReference>
<dbReference type="HAMAP" id="MF_01815">
    <property type="entry name" value="FabH"/>
    <property type="match status" value="1"/>
</dbReference>
<dbReference type="InterPro" id="IPR013747">
    <property type="entry name" value="ACP_syn_III_C"/>
</dbReference>
<dbReference type="InterPro" id="IPR013751">
    <property type="entry name" value="ACP_syn_III_N"/>
</dbReference>
<dbReference type="InterPro" id="IPR004655">
    <property type="entry name" value="FabH"/>
</dbReference>
<dbReference type="InterPro" id="IPR016039">
    <property type="entry name" value="Thiolase-like"/>
</dbReference>
<dbReference type="NCBIfam" id="TIGR00747">
    <property type="entry name" value="fabH"/>
    <property type="match status" value="1"/>
</dbReference>
<dbReference type="NCBIfam" id="NF006829">
    <property type="entry name" value="PRK09352.1"/>
    <property type="match status" value="1"/>
</dbReference>
<dbReference type="PANTHER" id="PTHR43091">
    <property type="entry name" value="3-OXOACYL-[ACYL-CARRIER-PROTEIN] SYNTHASE"/>
    <property type="match status" value="1"/>
</dbReference>
<dbReference type="PANTHER" id="PTHR43091:SF1">
    <property type="entry name" value="BETA-KETOACYL-[ACYL-CARRIER-PROTEIN] SYNTHASE III, CHLOROPLASTIC"/>
    <property type="match status" value="1"/>
</dbReference>
<dbReference type="Pfam" id="PF08545">
    <property type="entry name" value="ACP_syn_III"/>
    <property type="match status" value="1"/>
</dbReference>
<dbReference type="Pfam" id="PF08541">
    <property type="entry name" value="ACP_syn_III_C"/>
    <property type="match status" value="1"/>
</dbReference>
<dbReference type="SUPFAM" id="SSF53901">
    <property type="entry name" value="Thiolase-like"/>
    <property type="match status" value="1"/>
</dbReference>
<proteinExistence type="inferred from homology"/>
<accession>Q04DM7</accession>
<protein>
    <recommendedName>
        <fullName evidence="1">Beta-ketoacyl-[acyl-carrier-protein] synthase III</fullName>
        <shortName evidence="1">Beta-ketoacyl-ACP synthase III</shortName>
        <shortName evidence="1">KAS III</shortName>
        <ecNumber evidence="1">2.3.1.180</ecNumber>
    </recommendedName>
    <alternativeName>
        <fullName evidence="1">3-oxoacyl-[acyl-carrier-protein] synthase 3</fullName>
    </alternativeName>
    <alternativeName>
        <fullName evidence="1">3-oxoacyl-[acyl-carrier-protein] synthase III</fullName>
    </alternativeName>
</protein>
<feature type="chain" id="PRO_1000187885" description="Beta-ketoacyl-[acyl-carrier-protein] synthase III">
    <location>
        <begin position="1"/>
        <end position="323"/>
    </location>
</feature>
<feature type="region of interest" description="ACP-binding" evidence="1">
    <location>
        <begin position="251"/>
        <end position="255"/>
    </location>
</feature>
<feature type="active site" evidence="1">
    <location>
        <position position="112"/>
    </location>
</feature>
<feature type="active site" evidence="1">
    <location>
        <position position="250"/>
    </location>
</feature>
<feature type="active site" evidence="1">
    <location>
        <position position="280"/>
    </location>
</feature>
<evidence type="ECO:0000255" key="1">
    <source>
        <dbReference type="HAMAP-Rule" id="MF_01815"/>
    </source>
</evidence>
<reference key="1">
    <citation type="journal article" date="2006" name="Proc. Natl. Acad. Sci. U.S.A.">
        <title>Comparative genomics of the lactic acid bacteria.</title>
        <authorList>
            <person name="Makarova K.S."/>
            <person name="Slesarev A."/>
            <person name="Wolf Y.I."/>
            <person name="Sorokin A."/>
            <person name="Mirkin B."/>
            <person name="Koonin E.V."/>
            <person name="Pavlov A."/>
            <person name="Pavlova N."/>
            <person name="Karamychev V."/>
            <person name="Polouchine N."/>
            <person name="Shakhova V."/>
            <person name="Grigoriev I."/>
            <person name="Lou Y."/>
            <person name="Rohksar D."/>
            <person name="Lucas S."/>
            <person name="Huang K."/>
            <person name="Goodstein D.M."/>
            <person name="Hawkins T."/>
            <person name="Plengvidhya V."/>
            <person name="Welker D."/>
            <person name="Hughes J."/>
            <person name="Goh Y."/>
            <person name="Benson A."/>
            <person name="Baldwin K."/>
            <person name="Lee J.-H."/>
            <person name="Diaz-Muniz I."/>
            <person name="Dosti B."/>
            <person name="Smeianov V."/>
            <person name="Wechter W."/>
            <person name="Barabote R."/>
            <person name="Lorca G."/>
            <person name="Altermann E."/>
            <person name="Barrangou R."/>
            <person name="Ganesan B."/>
            <person name="Xie Y."/>
            <person name="Rawsthorne H."/>
            <person name="Tamir D."/>
            <person name="Parker C."/>
            <person name="Breidt F."/>
            <person name="Broadbent J.R."/>
            <person name="Hutkins R."/>
            <person name="O'Sullivan D."/>
            <person name="Steele J."/>
            <person name="Unlu G."/>
            <person name="Saier M.H. Jr."/>
            <person name="Klaenhammer T."/>
            <person name="Richardson P."/>
            <person name="Kozyavkin S."/>
            <person name="Weimer B.C."/>
            <person name="Mills D.A."/>
        </authorList>
    </citation>
    <scope>NUCLEOTIDE SEQUENCE [LARGE SCALE GENOMIC DNA]</scope>
    <source>
        <strain>ATCC BAA-331 / PSU-1</strain>
    </source>
</reference>
<sequence length="323" mass="34460">MRTIKIIQTASQLPEKIVSNDDLAGMMDTSDEWIRSRTGIFKRHIAVDETTASLAASVLQKLLKGSGISADQIDFVLVATMSPDSMAPSTAAQASALAGLSNAFAMDINVACSGFVYGLTLAHGLVNTLGSHYGVVIGAETLSKLVDWQERSTAVLFGDGAAGVLVEAVDGPERLLAADLKTFGKEAKSLTAGHLWSSTTWNQPEKGSRYFQMDGHAVYSFATRQVAASIKRTFEKISADIGDTDYFLLHQANQRIIDKVADLLKQPADRFLSNLSKYGNTSAASIPLLLDEMVTGNIVKSGQLLTLSGFGAGLSVGSIVYKY</sequence>
<comment type="function">
    <text evidence="1">Catalyzes the condensation reaction of fatty acid synthesis by the addition to an acyl acceptor of two carbons from malonyl-ACP. Catalyzes the first condensation reaction which initiates fatty acid synthesis and may therefore play a role in governing the total rate of fatty acid production. Possesses both acetoacetyl-ACP synthase and acetyl transacylase activities. Its substrate specificity determines the biosynthesis of branched-chain and/or straight-chain of fatty acids.</text>
</comment>
<comment type="catalytic activity">
    <reaction evidence="1">
        <text>malonyl-[ACP] + acetyl-CoA + H(+) = 3-oxobutanoyl-[ACP] + CO2 + CoA</text>
        <dbReference type="Rhea" id="RHEA:12080"/>
        <dbReference type="Rhea" id="RHEA-COMP:9623"/>
        <dbReference type="Rhea" id="RHEA-COMP:9625"/>
        <dbReference type="ChEBI" id="CHEBI:15378"/>
        <dbReference type="ChEBI" id="CHEBI:16526"/>
        <dbReference type="ChEBI" id="CHEBI:57287"/>
        <dbReference type="ChEBI" id="CHEBI:57288"/>
        <dbReference type="ChEBI" id="CHEBI:78449"/>
        <dbReference type="ChEBI" id="CHEBI:78450"/>
        <dbReference type="EC" id="2.3.1.180"/>
    </reaction>
</comment>
<comment type="pathway">
    <text evidence="1">Lipid metabolism; fatty acid biosynthesis.</text>
</comment>
<comment type="subunit">
    <text evidence="1">Homodimer.</text>
</comment>
<comment type="subcellular location">
    <subcellularLocation>
        <location evidence="1">Cytoplasm</location>
    </subcellularLocation>
</comment>
<comment type="domain">
    <text evidence="1">The last Arg residue of the ACP-binding site is essential for the weak association between ACP/AcpP and FabH.</text>
</comment>
<comment type="similarity">
    <text evidence="1">Belongs to the thiolase-like superfamily. FabH family.</text>
</comment>
<name>FABH_OENOB</name>
<keyword id="KW-0012">Acyltransferase</keyword>
<keyword id="KW-0963">Cytoplasm</keyword>
<keyword id="KW-0275">Fatty acid biosynthesis</keyword>
<keyword id="KW-0276">Fatty acid metabolism</keyword>
<keyword id="KW-0444">Lipid biosynthesis</keyword>
<keyword id="KW-0443">Lipid metabolism</keyword>
<keyword id="KW-0511">Multifunctional enzyme</keyword>
<keyword id="KW-1185">Reference proteome</keyword>
<keyword id="KW-0808">Transferase</keyword>
<organism>
    <name type="scientific">Oenococcus oeni (strain ATCC BAA-331 / PSU-1)</name>
    <dbReference type="NCBI Taxonomy" id="203123"/>
    <lineage>
        <taxon>Bacteria</taxon>
        <taxon>Bacillati</taxon>
        <taxon>Bacillota</taxon>
        <taxon>Bacilli</taxon>
        <taxon>Lactobacillales</taxon>
        <taxon>Lactobacillaceae</taxon>
        <taxon>Oenococcus</taxon>
    </lineage>
</organism>